<keyword id="KW-1185">Reference proteome</keyword>
<keyword id="KW-0687">Ribonucleoprotein</keyword>
<keyword id="KW-0689">Ribosomal protein</keyword>
<keyword id="KW-0694">RNA-binding</keyword>
<keyword id="KW-0699">rRNA-binding</keyword>
<keyword id="KW-0820">tRNA-binding</keyword>
<sequence>MARRNKARKRKISPDSRYDSVLLMRFINVIMKYGKKSVAEKIVYNALSSAEKEVNERGVSIFETAVENVTPSVEVRSRRIGGATYQVPVEVKKDRAVSLALRWIVKSASAMRKKSGKGFFKCLCSEILDAYNKRGGAFKMCEEKYKMAEANKAFSHLRF</sequence>
<comment type="function">
    <text evidence="1">One of the primary rRNA binding proteins, it binds directly to 16S rRNA where it nucleates assembly of the head domain of the 30S subunit. Is located at the subunit interface close to the decoding center, probably blocks exit of the E-site tRNA.</text>
</comment>
<comment type="subunit">
    <text evidence="1">Part of the 30S ribosomal subunit. Contacts proteins S9 and S11.</text>
</comment>
<comment type="similarity">
    <text evidence="1">Belongs to the universal ribosomal protein uS7 family.</text>
</comment>
<dbReference type="EMBL" id="AE017321">
    <property type="protein sequence ID" value="AAW70934.1"/>
    <property type="molecule type" value="Genomic_DNA"/>
</dbReference>
<dbReference type="RefSeq" id="WP_011256544.1">
    <property type="nucleotide sequence ID" value="NC_006833.1"/>
</dbReference>
<dbReference type="SMR" id="Q5GSU0"/>
<dbReference type="STRING" id="292805.Wbm0345"/>
<dbReference type="KEGG" id="wbm:Wbm0345"/>
<dbReference type="eggNOG" id="COG0049">
    <property type="taxonomic scope" value="Bacteria"/>
</dbReference>
<dbReference type="HOGENOM" id="CLU_072226_1_1_5"/>
<dbReference type="Proteomes" id="UP000000534">
    <property type="component" value="Chromosome"/>
</dbReference>
<dbReference type="GO" id="GO:0015935">
    <property type="term" value="C:small ribosomal subunit"/>
    <property type="evidence" value="ECO:0007669"/>
    <property type="project" value="InterPro"/>
</dbReference>
<dbReference type="GO" id="GO:0019843">
    <property type="term" value="F:rRNA binding"/>
    <property type="evidence" value="ECO:0007669"/>
    <property type="project" value="UniProtKB-UniRule"/>
</dbReference>
<dbReference type="GO" id="GO:0003735">
    <property type="term" value="F:structural constituent of ribosome"/>
    <property type="evidence" value="ECO:0007669"/>
    <property type="project" value="InterPro"/>
</dbReference>
<dbReference type="GO" id="GO:0000049">
    <property type="term" value="F:tRNA binding"/>
    <property type="evidence" value="ECO:0007669"/>
    <property type="project" value="UniProtKB-UniRule"/>
</dbReference>
<dbReference type="GO" id="GO:0006412">
    <property type="term" value="P:translation"/>
    <property type="evidence" value="ECO:0007669"/>
    <property type="project" value="UniProtKB-UniRule"/>
</dbReference>
<dbReference type="CDD" id="cd14869">
    <property type="entry name" value="uS7_Bacteria"/>
    <property type="match status" value="1"/>
</dbReference>
<dbReference type="Gene3D" id="1.10.455.10">
    <property type="entry name" value="Ribosomal protein S7 domain"/>
    <property type="match status" value="1"/>
</dbReference>
<dbReference type="HAMAP" id="MF_00480_B">
    <property type="entry name" value="Ribosomal_uS7_B"/>
    <property type="match status" value="1"/>
</dbReference>
<dbReference type="InterPro" id="IPR000235">
    <property type="entry name" value="Ribosomal_uS7"/>
</dbReference>
<dbReference type="InterPro" id="IPR005717">
    <property type="entry name" value="Ribosomal_uS7_bac/org-type"/>
</dbReference>
<dbReference type="InterPro" id="IPR020606">
    <property type="entry name" value="Ribosomal_uS7_CS"/>
</dbReference>
<dbReference type="InterPro" id="IPR023798">
    <property type="entry name" value="Ribosomal_uS7_dom"/>
</dbReference>
<dbReference type="InterPro" id="IPR036823">
    <property type="entry name" value="Ribosomal_uS7_dom_sf"/>
</dbReference>
<dbReference type="NCBIfam" id="TIGR01029">
    <property type="entry name" value="rpsG_bact"/>
    <property type="match status" value="1"/>
</dbReference>
<dbReference type="PANTHER" id="PTHR11205">
    <property type="entry name" value="RIBOSOMAL PROTEIN S7"/>
    <property type="match status" value="1"/>
</dbReference>
<dbReference type="Pfam" id="PF00177">
    <property type="entry name" value="Ribosomal_S7"/>
    <property type="match status" value="1"/>
</dbReference>
<dbReference type="PIRSF" id="PIRSF002122">
    <property type="entry name" value="RPS7p_RPS7a_RPS5e_RPS7o"/>
    <property type="match status" value="1"/>
</dbReference>
<dbReference type="SUPFAM" id="SSF47973">
    <property type="entry name" value="Ribosomal protein S7"/>
    <property type="match status" value="1"/>
</dbReference>
<dbReference type="PROSITE" id="PS00052">
    <property type="entry name" value="RIBOSOMAL_S7"/>
    <property type="match status" value="1"/>
</dbReference>
<reference key="1">
    <citation type="journal article" date="2005" name="PLoS Biol.">
        <title>The Wolbachia genome of Brugia malayi: endosymbiont evolution within a human pathogenic nematode.</title>
        <authorList>
            <person name="Foster J."/>
            <person name="Ganatra M."/>
            <person name="Kamal I."/>
            <person name="Ware J."/>
            <person name="Makarova K."/>
            <person name="Ivanova N."/>
            <person name="Bhattacharyya A."/>
            <person name="Kapatral V."/>
            <person name="Kumar S."/>
            <person name="Posfai J."/>
            <person name="Vincze T."/>
            <person name="Ingram J."/>
            <person name="Moran L."/>
            <person name="Lapidus A."/>
            <person name="Omelchenko M."/>
            <person name="Kyrpides N."/>
            <person name="Ghedin E."/>
            <person name="Wang S."/>
            <person name="Goltsman E."/>
            <person name="Joukov V."/>
            <person name="Ostrovskaya O."/>
            <person name="Tsukerman K."/>
            <person name="Mazur M."/>
            <person name="Comb D."/>
            <person name="Koonin E."/>
            <person name="Slatko B."/>
        </authorList>
    </citation>
    <scope>NUCLEOTIDE SEQUENCE [LARGE SCALE GENOMIC DNA]</scope>
    <source>
        <strain>TRS</strain>
    </source>
</reference>
<organism>
    <name type="scientific">Wolbachia sp. subsp. Brugia malayi (strain TRS)</name>
    <dbReference type="NCBI Taxonomy" id="292805"/>
    <lineage>
        <taxon>Bacteria</taxon>
        <taxon>Pseudomonadati</taxon>
        <taxon>Pseudomonadota</taxon>
        <taxon>Alphaproteobacteria</taxon>
        <taxon>Rickettsiales</taxon>
        <taxon>Anaplasmataceae</taxon>
        <taxon>Wolbachieae</taxon>
        <taxon>Wolbachia</taxon>
    </lineage>
</organism>
<proteinExistence type="inferred from homology"/>
<feature type="chain" id="PRO_0000226539" description="Small ribosomal subunit protein uS7">
    <location>
        <begin position="1"/>
        <end position="159"/>
    </location>
</feature>
<name>RS7_WOLTR</name>
<gene>
    <name evidence="1" type="primary">rpsG</name>
    <name type="ordered locus">Wbm0345</name>
</gene>
<accession>Q5GSU0</accession>
<protein>
    <recommendedName>
        <fullName evidence="1">Small ribosomal subunit protein uS7</fullName>
    </recommendedName>
    <alternativeName>
        <fullName evidence="2">30S ribosomal protein S7</fullName>
    </alternativeName>
</protein>
<evidence type="ECO:0000255" key="1">
    <source>
        <dbReference type="HAMAP-Rule" id="MF_00480"/>
    </source>
</evidence>
<evidence type="ECO:0000305" key="2"/>